<evidence type="ECO:0000255" key="1">
    <source>
        <dbReference type="HAMAP-Rule" id="MF_00394"/>
    </source>
</evidence>
<organism>
    <name type="scientific">Aliivibrio fischeri (strain ATCC 700601 / ES114)</name>
    <name type="common">Vibrio fischeri</name>
    <dbReference type="NCBI Taxonomy" id="312309"/>
    <lineage>
        <taxon>Bacteria</taxon>
        <taxon>Pseudomonadati</taxon>
        <taxon>Pseudomonadota</taxon>
        <taxon>Gammaproteobacteria</taxon>
        <taxon>Vibrionales</taxon>
        <taxon>Vibrionaceae</taxon>
        <taxon>Aliivibrio</taxon>
    </lineage>
</organism>
<proteinExistence type="inferred from homology"/>
<dbReference type="EC" id="1.1.1.94" evidence="1"/>
<dbReference type="EMBL" id="CP000020">
    <property type="protein sequence ID" value="AAW86843.1"/>
    <property type="molecule type" value="Genomic_DNA"/>
</dbReference>
<dbReference type="RefSeq" id="WP_011262744.1">
    <property type="nucleotide sequence ID" value="NZ_CAWLES010000001.1"/>
</dbReference>
<dbReference type="RefSeq" id="YP_205731.1">
    <property type="nucleotide sequence ID" value="NC_006840.2"/>
</dbReference>
<dbReference type="SMR" id="Q5E2A3"/>
<dbReference type="STRING" id="312309.VF_2348"/>
<dbReference type="EnsemblBacteria" id="AAW86843">
    <property type="protein sequence ID" value="AAW86843"/>
    <property type="gene ID" value="VF_2348"/>
</dbReference>
<dbReference type="GeneID" id="54165070"/>
<dbReference type="KEGG" id="vfi:VF_2348"/>
<dbReference type="PATRIC" id="fig|312309.11.peg.2387"/>
<dbReference type="eggNOG" id="COG0240">
    <property type="taxonomic scope" value="Bacteria"/>
</dbReference>
<dbReference type="HOGENOM" id="CLU_033449_0_2_6"/>
<dbReference type="OrthoDB" id="9812273at2"/>
<dbReference type="UniPathway" id="UPA00940"/>
<dbReference type="Proteomes" id="UP000000537">
    <property type="component" value="Chromosome I"/>
</dbReference>
<dbReference type="GO" id="GO:0005829">
    <property type="term" value="C:cytosol"/>
    <property type="evidence" value="ECO:0007669"/>
    <property type="project" value="TreeGrafter"/>
</dbReference>
<dbReference type="GO" id="GO:0047952">
    <property type="term" value="F:glycerol-3-phosphate dehydrogenase [NAD(P)+] activity"/>
    <property type="evidence" value="ECO:0007669"/>
    <property type="project" value="UniProtKB-UniRule"/>
</dbReference>
<dbReference type="GO" id="GO:0051287">
    <property type="term" value="F:NAD binding"/>
    <property type="evidence" value="ECO:0007669"/>
    <property type="project" value="InterPro"/>
</dbReference>
<dbReference type="GO" id="GO:0005975">
    <property type="term" value="P:carbohydrate metabolic process"/>
    <property type="evidence" value="ECO:0007669"/>
    <property type="project" value="InterPro"/>
</dbReference>
<dbReference type="GO" id="GO:0046167">
    <property type="term" value="P:glycerol-3-phosphate biosynthetic process"/>
    <property type="evidence" value="ECO:0007669"/>
    <property type="project" value="UniProtKB-UniRule"/>
</dbReference>
<dbReference type="GO" id="GO:0046168">
    <property type="term" value="P:glycerol-3-phosphate catabolic process"/>
    <property type="evidence" value="ECO:0007669"/>
    <property type="project" value="InterPro"/>
</dbReference>
<dbReference type="GO" id="GO:0046474">
    <property type="term" value="P:glycerophospholipid biosynthetic process"/>
    <property type="evidence" value="ECO:0007669"/>
    <property type="project" value="TreeGrafter"/>
</dbReference>
<dbReference type="FunFam" id="1.10.1040.10:FF:000001">
    <property type="entry name" value="Glycerol-3-phosphate dehydrogenase [NAD(P)+]"/>
    <property type="match status" value="1"/>
</dbReference>
<dbReference type="FunFam" id="3.40.50.720:FF:000019">
    <property type="entry name" value="Glycerol-3-phosphate dehydrogenase [NAD(P)+]"/>
    <property type="match status" value="1"/>
</dbReference>
<dbReference type="Gene3D" id="1.10.1040.10">
    <property type="entry name" value="N-(1-d-carboxylethyl)-l-norvaline Dehydrogenase, domain 2"/>
    <property type="match status" value="1"/>
</dbReference>
<dbReference type="Gene3D" id="3.40.50.720">
    <property type="entry name" value="NAD(P)-binding Rossmann-like Domain"/>
    <property type="match status" value="1"/>
</dbReference>
<dbReference type="HAMAP" id="MF_00394">
    <property type="entry name" value="NAD_Glyc3P_dehydrog"/>
    <property type="match status" value="1"/>
</dbReference>
<dbReference type="InterPro" id="IPR008927">
    <property type="entry name" value="6-PGluconate_DH-like_C_sf"/>
</dbReference>
<dbReference type="InterPro" id="IPR013328">
    <property type="entry name" value="6PGD_dom2"/>
</dbReference>
<dbReference type="InterPro" id="IPR006168">
    <property type="entry name" value="G3P_DH_NAD-dep"/>
</dbReference>
<dbReference type="InterPro" id="IPR006109">
    <property type="entry name" value="G3P_DH_NAD-dep_C"/>
</dbReference>
<dbReference type="InterPro" id="IPR011128">
    <property type="entry name" value="G3P_DH_NAD-dep_N"/>
</dbReference>
<dbReference type="InterPro" id="IPR036291">
    <property type="entry name" value="NAD(P)-bd_dom_sf"/>
</dbReference>
<dbReference type="NCBIfam" id="NF000939">
    <property type="entry name" value="PRK00094.1-1"/>
    <property type="match status" value="1"/>
</dbReference>
<dbReference type="NCBIfam" id="NF000940">
    <property type="entry name" value="PRK00094.1-2"/>
    <property type="match status" value="1"/>
</dbReference>
<dbReference type="NCBIfam" id="NF000942">
    <property type="entry name" value="PRK00094.1-4"/>
    <property type="match status" value="1"/>
</dbReference>
<dbReference type="PANTHER" id="PTHR11728">
    <property type="entry name" value="GLYCEROL-3-PHOSPHATE DEHYDROGENASE"/>
    <property type="match status" value="1"/>
</dbReference>
<dbReference type="PANTHER" id="PTHR11728:SF1">
    <property type="entry name" value="GLYCEROL-3-PHOSPHATE DEHYDROGENASE [NAD(+)] 2, CHLOROPLASTIC"/>
    <property type="match status" value="1"/>
</dbReference>
<dbReference type="Pfam" id="PF07479">
    <property type="entry name" value="NAD_Gly3P_dh_C"/>
    <property type="match status" value="1"/>
</dbReference>
<dbReference type="Pfam" id="PF01210">
    <property type="entry name" value="NAD_Gly3P_dh_N"/>
    <property type="match status" value="1"/>
</dbReference>
<dbReference type="PIRSF" id="PIRSF000114">
    <property type="entry name" value="Glycerol-3-P_dh"/>
    <property type="match status" value="1"/>
</dbReference>
<dbReference type="PRINTS" id="PR00077">
    <property type="entry name" value="GPDHDRGNASE"/>
</dbReference>
<dbReference type="SUPFAM" id="SSF48179">
    <property type="entry name" value="6-phosphogluconate dehydrogenase C-terminal domain-like"/>
    <property type="match status" value="1"/>
</dbReference>
<dbReference type="SUPFAM" id="SSF51735">
    <property type="entry name" value="NAD(P)-binding Rossmann-fold domains"/>
    <property type="match status" value="1"/>
</dbReference>
<dbReference type="PROSITE" id="PS00957">
    <property type="entry name" value="NAD_G3PDH"/>
    <property type="match status" value="1"/>
</dbReference>
<name>GPDA_ALIF1</name>
<feature type="chain" id="PRO_0000255394" description="Glycerol-3-phosphate dehydrogenase [NAD(P)+]">
    <location>
        <begin position="1"/>
        <end position="343"/>
    </location>
</feature>
<feature type="active site" description="Proton acceptor" evidence="1">
    <location>
        <position position="202"/>
    </location>
</feature>
<feature type="binding site" evidence="1">
    <location>
        <position position="22"/>
    </location>
    <ligand>
        <name>NADPH</name>
        <dbReference type="ChEBI" id="CHEBI:57783"/>
    </ligand>
</feature>
<feature type="binding site" evidence="1">
    <location>
        <position position="23"/>
    </location>
    <ligand>
        <name>NADPH</name>
        <dbReference type="ChEBI" id="CHEBI:57783"/>
    </ligand>
</feature>
<feature type="binding site" evidence="1">
    <location>
        <position position="43"/>
    </location>
    <ligand>
        <name>NADPH</name>
        <dbReference type="ChEBI" id="CHEBI:57783"/>
    </ligand>
</feature>
<feature type="binding site" evidence="1">
    <location>
        <position position="117"/>
    </location>
    <ligand>
        <name>NADPH</name>
        <dbReference type="ChEBI" id="CHEBI:57783"/>
    </ligand>
</feature>
<feature type="binding site" evidence="1">
    <location>
        <position position="117"/>
    </location>
    <ligand>
        <name>sn-glycerol 3-phosphate</name>
        <dbReference type="ChEBI" id="CHEBI:57597"/>
    </ligand>
</feature>
<feature type="binding site" evidence="1">
    <location>
        <position position="146"/>
    </location>
    <ligand>
        <name>sn-glycerol 3-phosphate</name>
        <dbReference type="ChEBI" id="CHEBI:57597"/>
    </ligand>
</feature>
<feature type="binding site" evidence="1">
    <location>
        <position position="148"/>
    </location>
    <ligand>
        <name>sn-glycerol 3-phosphate</name>
        <dbReference type="ChEBI" id="CHEBI:57597"/>
    </ligand>
</feature>
<feature type="binding site" evidence="1">
    <location>
        <position position="150"/>
    </location>
    <ligand>
        <name>NADPH</name>
        <dbReference type="ChEBI" id="CHEBI:57783"/>
    </ligand>
</feature>
<feature type="binding site" evidence="1">
    <location>
        <position position="202"/>
    </location>
    <ligand>
        <name>sn-glycerol 3-phosphate</name>
        <dbReference type="ChEBI" id="CHEBI:57597"/>
    </ligand>
</feature>
<feature type="binding site" evidence="1">
    <location>
        <position position="255"/>
    </location>
    <ligand>
        <name>sn-glycerol 3-phosphate</name>
        <dbReference type="ChEBI" id="CHEBI:57597"/>
    </ligand>
</feature>
<feature type="binding site" evidence="1">
    <location>
        <position position="265"/>
    </location>
    <ligand>
        <name>sn-glycerol 3-phosphate</name>
        <dbReference type="ChEBI" id="CHEBI:57597"/>
    </ligand>
</feature>
<feature type="binding site" evidence="1">
    <location>
        <position position="266"/>
    </location>
    <ligand>
        <name>NADPH</name>
        <dbReference type="ChEBI" id="CHEBI:57783"/>
    </ligand>
</feature>
<feature type="binding site" evidence="1">
    <location>
        <position position="266"/>
    </location>
    <ligand>
        <name>sn-glycerol 3-phosphate</name>
        <dbReference type="ChEBI" id="CHEBI:57597"/>
    </ligand>
</feature>
<feature type="binding site" evidence="1">
    <location>
        <position position="267"/>
    </location>
    <ligand>
        <name>sn-glycerol 3-phosphate</name>
        <dbReference type="ChEBI" id="CHEBI:57597"/>
    </ligand>
</feature>
<feature type="binding site" evidence="1">
    <location>
        <position position="290"/>
    </location>
    <ligand>
        <name>NADPH</name>
        <dbReference type="ChEBI" id="CHEBI:57783"/>
    </ligand>
</feature>
<feature type="binding site" evidence="1">
    <location>
        <position position="292"/>
    </location>
    <ligand>
        <name>NADPH</name>
        <dbReference type="ChEBI" id="CHEBI:57783"/>
    </ligand>
</feature>
<comment type="function">
    <text evidence="1">Catalyzes the reduction of the glycolytic intermediate dihydroxyacetone phosphate (DHAP) to sn-glycerol 3-phosphate (G3P), the key precursor for phospholipid synthesis.</text>
</comment>
<comment type="catalytic activity">
    <reaction evidence="1">
        <text>sn-glycerol 3-phosphate + NAD(+) = dihydroxyacetone phosphate + NADH + H(+)</text>
        <dbReference type="Rhea" id="RHEA:11092"/>
        <dbReference type="ChEBI" id="CHEBI:15378"/>
        <dbReference type="ChEBI" id="CHEBI:57540"/>
        <dbReference type="ChEBI" id="CHEBI:57597"/>
        <dbReference type="ChEBI" id="CHEBI:57642"/>
        <dbReference type="ChEBI" id="CHEBI:57945"/>
        <dbReference type="EC" id="1.1.1.94"/>
    </reaction>
    <physiologicalReaction direction="right-to-left" evidence="1">
        <dbReference type="Rhea" id="RHEA:11094"/>
    </physiologicalReaction>
</comment>
<comment type="catalytic activity">
    <reaction evidence="1">
        <text>sn-glycerol 3-phosphate + NADP(+) = dihydroxyacetone phosphate + NADPH + H(+)</text>
        <dbReference type="Rhea" id="RHEA:11096"/>
        <dbReference type="ChEBI" id="CHEBI:15378"/>
        <dbReference type="ChEBI" id="CHEBI:57597"/>
        <dbReference type="ChEBI" id="CHEBI:57642"/>
        <dbReference type="ChEBI" id="CHEBI:57783"/>
        <dbReference type="ChEBI" id="CHEBI:58349"/>
        <dbReference type="EC" id="1.1.1.94"/>
    </reaction>
    <physiologicalReaction direction="right-to-left" evidence="1">
        <dbReference type="Rhea" id="RHEA:11098"/>
    </physiologicalReaction>
</comment>
<comment type="pathway">
    <text evidence="1">Membrane lipid metabolism; glycerophospholipid metabolism.</text>
</comment>
<comment type="subcellular location">
    <subcellularLocation>
        <location evidence="1">Cytoplasm</location>
    </subcellularLocation>
</comment>
<comment type="similarity">
    <text evidence="1">Belongs to the NAD-dependent glycerol-3-phosphate dehydrogenase family.</text>
</comment>
<keyword id="KW-0963">Cytoplasm</keyword>
<keyword id="KW-0444">Lipid biosynthesis</keyword>
<keyword id="KW-0443">Lipid metabolism</keyword>
<keyword id="KW-0520">NAD</keyword>
<keyword id="KW-0521">NADP</keyword>
<keyword id="KW-0547">Nucleotide-binding</keyword>
<keyword id="KW-0560">Oxidoreductase</keyword>
<keyword id="KW-0594">Phospholipid biosynthesis</keyword>
<keyword id="KW-1208">Phospholipid metabolism</keyword>
<keyword id="KW-1185">Reference proteome</keyword>
<protein>
    <recommendedName>
        <fullName evidence="1">Glycerol-3-phosphate dehydrogenase [NAD(P)+]</fullName>
        <ecNumber evidence="1">1.1.1.94</ecNumber>
    </recommendedName>
    <alternativeName>
        <fullName evidence="1">NAD(P)(+)-dependent glycerol-3-phosphate dehydrogenase</fullName>
    </alternativeName>
    <alternativeName>
        <fullName evidence="1">NAD(P)H-dependent dihydroxyacetone-phosphate reductase</fullName>
    </alternativeName>
</protein>
<reference key="1">
    <citation type="journal article" date="2005" name="Proc. Natl. Acad. Sci. U.S.A.">
        <title>Complete genome sequence of Vibrio fischeri: a symbiotic bacterium with pathogenic congeners.</title>
        <authorList>
            <person name="Ruby E.G."/>
            <person name="Urbanowski M."/>
            <person name="Campbell J."/>
            <person name="Dunn A."/>
            <person name="Faini M."/>
            <person name="Gunsalus R."/>
            <person name="Lostroh P."/>
            <person name="Lupp C."/>
            <person name="McCann J."/>
            <person name="Millikan D."/>
            <person name="Schaefer A."/>
            <person name="Stabb E."/>
            <person name="Stevens A."/>
            <person name="Visick K."/>
            <person name="Whistler C."/>
            <person name="Greenberg E.P."/>
        </authorList>
    </citation>
    <scope>NUCLEOTIDE SEQUENCE [LARGE SCALE GENOMIC DNA]</scope>
    <source>
        <strain>ATCC 700601 / ES114</strain>
    </source>
</reference>
<sequence>MVTMTTQTDYSDISMTVLGAGSYGTSLAISLARNGAKVILWGHEEAHMNRLEADRANEEFLPGVAFPPSLIMSTDLEKSVQASRDLLVVVPSHVFGLVLGNVKPFLRDDSRICWATKGLEPETGRLLKEVAVEALGESHSLAVLSGPTFAKELASGMPTAIAVASPDKEFVKDLQEKIHCSKTFRVYANNDFTGMQLGGAVKNVIAIGAGMSDGIGFGANARTALITRGLAEMTRLGVALGAEAETFMGMAGLGDLVLTCTDNQSRNRRFGLALGQGGDVDSAQEEIGQVVEGYRNTKEVWLLANRMGVEMPIVEQIYQVLYQGKDARVAAQDLLARDKKSES</sequence>
<gene>
    <name evidence="1" type="primary">gpsA</name>
    <name type="ordered locus">VF_2348</name>
</gene>
<accession>Q5E2A3</accession>